<protein>
    <recommendedName>
        <fullName evidence="1">Cysteine desulfuration protein SufE</fullName>
    </recommendedName>
</protein>
<evidence type="ECO:0000255" key="1">
    <source>
        <dbReference type="HAMAP-Rule" id="MF_01832"/>
    </source>
</evidence>
<accession>B1JJ49</accession>
<organism>
    <name type="scientific">Yersinia pseudotuberculosis serotype O:3 (strain YPIII)</name>
    <dbReference type="NCBI Taxonomy" id="502800"/>
    <lineage>
        <taxon>Bacteria</taxon>
        <taxon>Pseudomonadati</taxon>
        <taxon>Pseudomonadota</taxon>
        <taxon>Gammaproteobacteria</taxon>
        <taxon>Enterobacterales</taxon>
        <taxon>Yersiniaceae</taxon>
        <taxon>Yersinia</taxon>
    </lineage>
</organism>
<dbReference type="EMBL" id="CP000950">
    <property type="protein sequence ID" value="ACA68143.1"/>
    <property type="molecule type" value="Genomic_DNA"/>
</dbReference>
<dbReference type="RefSeq" id="WP_002211804.1">
    <property type="nucleotide sequence ID" value="NZ_CP009792.1"/>
</dbReference>
<dbReference type="SMR" id="B1JJ49"/>
<dbReference type="GeneID" id="57976275"/>
<dbReference type="KEGG" id="ypy:YPK_1852"/>
<dbReference type="PATRIC" id="fig|502800.11.peg.2522"/>
<dbReference type="UniPathway" id="UPA00266"/>
<dbReference type="GO" id="GO:0005737">
    <property type="term" value="C:cytoplasm"/>
    <property type="evidence" value="ECO:0007669"/>
    <property type="project" value="UniProtKB-SubCell"/>
</dbReference>
<dbReference type="GO" id="GO:0016226">
    <property type="term" value="P:iron-sulfur cluster assembly"/>
    <property type="evidence" value="ECO:0007669"/>
    <property type="project" value="InterPro"/>
</dbReference>
<dbReference type="GO" id="GO:0006790">
    <property type="term" value="P:sulfur compound metabolic process"/>
    <property type="evidence" value="ECO:0007669"/>
    <property type="project" value="InterPro"/>
</dbReference>
<dbReference type="Gene3D" id="3.90.1010.10">
    <property type="match status" value="1"/>
</dbReference>
<dbReference type="HAMAP" id="MF_01832">
    <property type="entry name" value="SufE"/>
    <property type="match status" value="1"/>
</dbReference>
<dbReference type="InterPro" id="IPR023939">
    <property type="entry name" value="Cysteine_desulfuration_SufE"/>
</dbReference>
<dbReference type="InterPro" id="IPR003808">
    <property type="entry name" value="Fe-S_metab-assoc_dom"/>
</dbReference>
<dbReference type="NCBIfam" id="NF006792">
    <property type="entry name" value="PRK09296.1"/>
    <property type="match status" value="1"/>
</dbReference>
<dbReference type="PANTHER" id="PTHR43597:SF3">
    <property type="entry name" value="CYSTEINE DESULFURATION PROTEIN SUFE"/>
    <property type="match status" value="1"/>
</dbReference>
<dbReference type="PANTHER" id="PTHR43597">
    <property type="entry name" value="SULFUR ACCEPTOR PROTEIN CSDE"/>
    <property type="match status" value="1"/>
</dbReference>
<dbReference type="Pfam" id="PF02657">
    <property type="entry name" value="SufE"/>
    <property type="match status" value="1"/>
</dbReference>
<dbReference type="SUPFAM" id="SSF82649">
    <property type="entry name" value="SufE/NifU"/>
    <property type="match status" value="1"/>
</dbReference>
<gene>
    <name evidence="1" type="primary">sufE</name>
    <name type="ordered locus">YPK_1852</name>
</gene>
<keyword id="KW-0963">Cytoplasm</keyword>
<feature type="chain" id="PRO_1000188341" description="Cysteine desulfuration protein SufE">
    <location>
        <begin position="1"/>
        <end position="140"/>
    </location>
</feature>
<feature type="active site" description="Cysteine persulfide intermediate" evidence="1">
    <location>
        <position position="51"/>
    </location>
</feature>
<reference key="1">
    <citation type="submission" date="2008-02" db="EMBL/GenBank/DDBJ databases">
        <title>Complete sequence of Yersinia pseudotuberculosis YPIII.</title>
        <authorList>
            <consortium name="US DOE Joint Genome Institute"/>
            <person name="Copeland A."/>
            <person name="Lucas S."/>
            <person name="Lapidus A."/>
            <person name="Glavina del Rio T."/>
            <person name="Dalin E."/>
            <person name="Tice H."/>
            <person name="Bruce D."/>
            <person name="Goodwin L."/>
            <person name="Pitluck S."/>
            <person name="Munk A.C."/>
            <person name="Brettin T."/>
            <person name="Detter J.C."/>
            <person name="Han C."/>
            <person name="Tapia R."/>
            <person name="Schmutz J."/>
            <person name="Larimer F."/>
            <person name="Land M."/>
            <person name="Hauser L."/>
            <person name="Challacombe J.F."/>
            <person name="Green L."/>
            <person name="Lindler L.E."/>
            <person name="Nikolich M.P."/>
            <person name="Richardson P."/>
        </authorList>
    </citation>
    <scope>NUCLEOTIDE SEQUENCE [LARGE SCALE GENOMIC DNA]</scope>
    <source>
        <strain>YPIII</strain>
    </source>
</reference>
<proteinExistence type="inferred from homology"/>
<sequence length="140" mass="15581">MAGLPDRDKLIRNFSRCLNWEEKYLYIIELGGQLAPLTEQQRHPENLISGCQSQVWIAMTLSAEGHVIFAGDSDAAIVKGLVAVVFILYHDLTPQQIISLDVRPFFADLALSQHLTPSRSQGLEAMIRAIRTKVANLSAH</sequence>
<name>SUFE_YERPY</name>
<comment type="function">
    <text evidence="1">Participates in cysteine desulfuration mediated by SufS. Cysteine desulfuration mobilizes sulfur from L-cysteine to yield L-alanine and constitutes an essential step in sulfur metabolism for biosynthesis of a variety of sulfur-containing biomolecules. Functions as a sulfur acceptor for SufS, by mediating the direct transfer of the sulfur atom from the S-sulfanylcysteine of SufS, an intermediate product of cysteine desulfuration process.</text>
</comment>
<comment type="pathway">
    <text evidence="1">Cofactor biosynthesis; iron-sulfur cluster biosynthesis.</text>
</comment>
<comment type="subunit">
    <text evidence="1">Homodimer. Interacts with SufS.</text>
</comment>
<comment type="subcellular location">
    <subcellularLocation>
        <location evidence="1">Cytoplasm</location>
    </subcellularLocation>
</comment>
<comment type="similarity">
    <text evidence="1">Belongs to the SufE family.</text>
</comment>